<gene>
    <name type="primary">YOP1</name>
    <name type="ordered locus">CNF03700</name>
</gene>
<organism>
    <name type="scientific">Cryptococcus neoformans var. neoformans serotype D (strain JEC21 / ATCC MYA-565)</name>
    <name type="common">Filobasidiella neoformans</name>
    <dbReference type="NCBI Taxonomy" id="214684"/>
    <lineage>
        <taxon>Eukaryota</taxon>
        <taxon>Fungi</taxon>
        <taxon>Dikarya</taxon>
        <taxon>Basidiomycota</taxon>
        <taxon>Agaricomycotina</taxon>
        <taxon>Tremellomycetes</taxon>
        <taxon>Tremellales</taxon>
        <taxon>Cryptococcaceae</taxon>
        <taxon>Cryptococcus</taxon>
        <taxon>Cryptococcus neoformans species complex</taxon>
    </lineage>
</organism>
<reference key="1">
    <citation type="journal article" date="2005" name="Science">
        <title>The genome of the basidiomycetous yeast and human pathogen Cryptococcus neoformans.</title>
        <authorList>
            <person name="Loftus B.J."/>
            <person name="Fung E."/>
            <person name="Roncaglia P."/>
            <person name="Rowley D."/>
            <person name="Amedeo P."/>
            <person name="Bruno D."/>
            <person name="Vamathevan J."/>
            <person name="Miranda M."/>
            <person name="Anderson I.J."/>
            <person name="Fraser J.A."/>
            <person name="Allen J.E."/>
            <person name="Bosdet I.E."/>
            <person name="Brent M.R."/>
            <person name="Chiu R."/>
            <person name="Doering T.L."/>
            <person name="Donlin M.J."/>
            <person name="D'Souza C.A."/>
            <person name="Fox D.S."/>
            <person name="Grinberg V."/>
            <person name="Fu J."/>
            <person name="Fukushima M."/>
            <person name="Haas B.J."/>
            <person name="Huang J.C."/>
            <person name="Janbon G."/>
            <person name="Jones S.J.M."/>
            <person name="Koo H.L."/>
            <person name="Krzywinski M.I."/>
            <person name="Kwon-Chung K.J."/>
            <person name="Lengeler K.B."/>
            <person name="Maiti R."/>
            <person name="Marra M.A."/>
            <person name="Marra R.E."/>
            <person name="Mathewson C.A."/>
            <person name="Mitchell T.G."/>
            <person name="Pertea M."/>
            <person name="Riggs F.R."/>
            <person name="Salzberg S.L."/>
            <person name="Schein J.E."/>
            <person name="Shvartsbeyn A."/>
            <person name="Shin H."/>
            <person name="Shumway M."/>
            <person name="Specht C.A."/>
            <person name="Suh B.B."/>
            <person name="Tenney A."/>
            <person name="Utterback T.R."/>
            <person name="Wickes B.L."/>
            <person name="Wortman J.R."/>
            <person name="Wye N.H."/>
            <person name="Kronstad J.W."/>
            <person name="Lodge J.K."/>
            <person name="Heitman J."/>
            <person name="Davis R.W."/>
            <person name="Fraser C.M."/>
            <person name="Hyman R.W."/>
        </authorList>
    </citation>
    <scope>NUCLEOTIDE SEQUENCE [LARGE SCALE GENOMIC DNA]</scope>
    <source>
        <strain>JEC21 / ATCC MYA-565</strain>
    </source>
</reference>
<feature type="chain" id="PRO_0000101850" description="Protein YOP1">
    <location>
        <begin position="1"/>
        <end position="206"/>
    </location>
</feature>
<feature type="topological domain" description="Cytoplasmic" evidence="1">
    <location>
        <begin position="1"/>
        <end position="52"/>
    </location>
</feature>
<feature type="transmembrane region" description="Helical" evidence="1">
    <location>
        <begin position="53"/>
        <end position="72"/>
    </location>
</feature>
<feature type="topological domain" description="Lumenal" evidence="1">
    <location>
        <begin position="73"/>
        <end position="74"/>
    </location>
</feature>
<feature type="transmembrane region" description="Helical" evidence="1">
    <location>
        <begin position="75"/>
        <end position="95"/>
    </location>
</feature>
<feature type="topological domain" description="Cytoplasmic" evidence="1">
    <location>
        <begin position="96"/>
        <end position="105"/>
    </location>
</feature>
<feature type="transmembrane region" description="Helical" evidence="1">
    <location>
        <begin position="106"/>
        <end position="122"/>
    </location>
</feature>
<feature type="topological domain" description="Lumenal" evidence="1">
    <location>
        <begin position="123"/>
        <end position="126"/>
    </location>
</feature>
<feature type="transmembrane region" description="Helical" evidence="1">
    <location>
        <begin position="127"/>
        <end position="145"/>
    </location>
</feature>
<feature type="topological domain" description="Cytoplasmic" evidence="1">
    <location>
        <begin position="146"/>
        <end position="206"/>
    </location>
</feature>
<feature type="region of interest" description="Disordered" evidence="3">
    <location>
        <begin position="177"/>
        <end position="206"/>
    </location>
</feature>
<accession>P0CN16</accession>
<accession>Q55R79</accession>
<accession>Q5KEZ1</accession>
<sequence>MAAHSEQIKNNFLNNPYAQQVFNIANGQVSALDAELNKYPILRQLEQQTKVPKAYGVIALGFSSVLLIFFNMFGLAQPISNLIGWALPAYLSILAIESPQTNDDKQWLTYWVVFGSLNLVESMGLRAVLYWVPMYFVFKTLFTIWLMLPATRGAEILYFHFLRPMVGNVKSRSQSSFGTSDPLAKETGFNPAGTTAPSSFAHEKTL</sequence>
<protein>
    <recommendedName>
        <fullName>Protein YOP1</fullName>
    </recommendedName>
</protein>
<comment type="function">
    <text evidence="1">Required to generate and maintain the structure of the tubular endoplasmic reticulum network and the vacuole. Induces high curvature in membranes and causes membrane tubule formation. Involved in membrane/vesicle trafficking.</text>
</comment>
<comment type="subunit">
    <text evidence="1">Oligomer.</text>
</comment>
<comment type="subcellular location">
    <subcellularLocation>
        <location evidence="1">Endoplasmic reticulum membrane</location>
        <topology evidence="1">Multi-pass membrane protein</topology>
    </subcellularLocation>
    <subcellularLocation>
        <location evidence="1">Golgi apparatus membrane</location>
        <topology evidence="2">Multi-pass membrane protein</topology>
    </subcellularLocation>
</comment>
<comment type="domain">
    <text evidence="1">The short lumenal loops between transmembrane domains 1 and 2 and between transmembrane domains 3 and 4 may impart a wedge-like configuration, thus deforming membranes.</text>
</comment>
<comment type="similarity">
    <text evidence="4">Belongs to the DP1 family.</text>
</comment>
<keyword id="KW-0256">Endoplasmic reticulum</keyword>
<keyword id="KW-0333">Golgi apparatus</keyword>
<keyword id="KW-0472">Membrane</keyword>
<keyword id="KW-1185">Reference proteome</keyword>
<keyword id="KW-0812">Transmembrane</keyword>
<keyword id="KW-1133">Transmembrane helix</keyword>
<evidence type="ECO:0000250" key="1">
    <source>
        <dbReference type="UniProtKB" id="Q12402"/>
    </source>
</evidence>
<evidence type="ECO:0000255" key="2"/>
<evidence type="ECO:0000256" key="3">
    <source>
        <dbReference type="SAM" id="MobiDB-lite"/>
    </source>
</evidence>
<evidence type="ECO:0000305" key="4"/>
<proteinExistence type="inferred from homology"/>
<name>YOP1_CRYNJ</name>
<dbReference type="EMBL" id="AE017346">
    <property type="protein sequence ID" value="AAW44134.1"/>
    <property type="molecule type" value="Genomic_DNA"/>
</dbReference>
<dbReference type="RefSeq" id="XP_571441.1">
    <property type="nucleotide sequence ID" value="XM_571441.1"/>
</dbReference>
<dbReference type="SMR" id="P0CN16"/>
<dbReference type="FunCoup" id="P0CN16">
    <property type="interactions" value="87"/>
</dbReference>
<dbReference type="STRING" id="214684.P0CN16"/>
<dbReference type="PaxDb" id="214684-P0CN16"/>
<dbReference type="EnsemblFungi" id="AAW44134">
    <property type="protein sequence ID" value="AAW44134"/>
    <property type="gene ID" value="CNF03700"/>
</dbReference>
<dbReference type="GeneID" id="3258144"/>
<dbReference type="KEGG" id="cne:CNF03700"/>
<dbReference type="VEuPathDB" id="FungiDB:CNF03700"/>
<dbReference type="eggNOG" id="KOG1725">
    <property type="taxonomic scope" value="Eukaryota"/>
</dbReference>
<dbReference type="HOGENOM" id="CLU_028431_2_1_1"/>
<dbReference type="InParanoid" id="P0CN16"/>
<dbReference type="OMA" id="CMIPGPW"/>
<dbReference type="OrthoDB" id="10009287at2759"/>
<dbReference type="Proteomes" id="UP000002149">
    <property type="component" value="Chromosome 6"/>
</dbReference>
<dbReference type="GO" id="GO:0005789">
    <property type="term" value="C:endoplasmic reticulum membrane"/>
    <property type="evidence" value="ECO:0007669"/>
    <property type="project" value="UniProtKB-SubCell"/>
</dbReference>
<dbReference type="GO" id="GO:0000139">
    <property type="term" value="C:Golgi membrane"/>
    <property type="evidence" value="ECO:0007669"/>
    <property type="project" value="UniProtKB-SubCell"/>
</dbReference>
<dbReference type="InterPro" id="IPR004345">
    <property type="entry name" value="TB2_DP1_HVA22"/>
</dbReference>
<dbReference type="PANTHER" id="PTHR12300">
    <property type="entry name" value="HVA22-LIKE PROTEINS"/>
    <property type="match status" value="1"/>
</dbReference>
<dbReference type="PANTHER" id="PTHR12300:SF161">
    <property type="entry name" value="RECEPTOR EXPRESSION-ENHANCING PROTEIN"/>
    <property type="match status" value="1"/>
</dbReference>
<dbReference type="Pfam" id="PF03134">
    <property type="entry name" value="TB2_DP1_HVA22"/>
    <property type="match status" value="1"/>
</dbReference>